<feature type="chain" id="PRO_0000272887" description="Large ribosomal subunit protein uL23cz/uL23cy">
    <location>
        <begin position="1"/>
        <end position="93"/>
    </location>
</feature>
<reference key="1">
    <citation type="journal article" date="2002" name="Mol. Biol. Evol.">
        <title>The plastid chromosome of Atropa belladonna and its comparison with that of Nicotiana tabacum: the role of RNA editing in generating divergence in the process of plant speciation.</title>
        <authorList>
            <person name="Schmitz-Linneweber C."/>
            <person name="Regel R."/>
            <person name="Du T.G."/>
            <person name="Hupfer H."/>
            <person name="Herrmann R.G."/>
            <person name="Maier R.M."/>
        </authorList>
    </citation>
    <scope>NUCLEOTIDE SEQUENCE [LARGE SCALE GENOMIC DNA]</scope>
    <source>
        <strain>cv. Ab5p(kan)</strain>
    </source>
</reference>
<keyword id="KW-0150">Chloroplast</keyword>
<keyword id="KW-0934">Plastid</keyword>
<keyword id="KW-0687">Ribonucleoprotein</keyword>
<keyword id="KW-0689">Ribosomal protein</keyword>
<keyword id="KW-0694">RNA-binding</keyword>
<keyword id="KW-0699">rRNA-binding</keyword>
<organism>
    <name type="scientific">Atropa belladonna</name>
    <name type="common">Belladonna</name>
    <name type="synonym">Deadly nightshade</name>
    <dbReference type="NCBI Taxonomy" id="33113"/>
    <lineage>
        <taxon>Eukaryota</taxon>
        <taxon>Viridiplantae</taxon>
        <taxon>Streptophyta</taxon>
        <taxon>Embryophyta</taxon>
        <taxon>Tracheophyta</taxon>
        <taxon>Spermatophyta</taxon>
        <taxon>Magnoliopsida</taxon>
        <taxon>eudicotyledons</taxon>
        <taxon>Gunneridae</taxon>
        <taxon>Pentapetalae</taxon>
        <taxon>asterids</taxon>
        <taxon>lamiids</taxon>
        <taxon>Solanales</taxon>
        <taxon>Solanaceae</taxon>
        <taxon>Solanoideae</taxon>
        <taxon>Hyoscyameae</taxon>
        <taxon>Atropa</taxon>
    </lineage>
</organism>
<name>RK23_ATRBE</name>
<evidence type="ECO:0000250" key="1"/>
<evidence type="ECO:0000305" key="2"/>
<proteinExistence type="inferred from homology"/>
<sequence>MDGIKYAVFTDKSIRLLGKNQYTSNVESGSTRTEIKHWVELFFGVKVIAMNSHRLPGKSRRMGPIMGHTMHYRRMIITLQPGYSIPPLRKKRT</sequence>
<protein>
    <recommendedName>
        <fullName evidence="2">Large ribosomal subunit protein uL23cz/uL23cy</fullName>
    </recommendedName>
    <alternativeName>
        <fullName>50S ribosomal protein L23, chloroplastic</fullName>
    </alternativeName>
</protein>
<accession>Q7FNR4</accession>
<gene>
    <name type="primary">rpl23-A</name>
</gene>
<gene>
    <name type="primary">rpl23-B</name>
</gene>
<dbReference type="EMBL" id="AJ316582">
    <property type="protein sequence ID" value="CAC88086.1"/>
    <property type="molecule type" value="Genomic_DNA"/>
</dbReference>
<dbReference type="EMBL" id="AJ316582">
    <property type="protein sequence ID" value="CAC88109.1"/>
    <property type="molecule type" value="Genomic_DNA"/>
</dbReference>
<dbReference type="SMR" id="Q7FNR4"/>
<dbReference type="GO" id="GO:0009507">
    <property type="term" value="C:chloroplast"/>
    <property type="evidence" value="ECO:0007669"/>
    <property type="project" value="UniProtKB-SubCell"/>
</dbReference>
<dbReference type="GO" id="GO:1990904">
    <property type="term" value="C:ribonucleoprotein complex"/>
    <property type="evidence" value="ECO:0007669"/>
    <property type="project" value="UniProtKB-KW"/>
</dbReference>
<dbReference type="GO" id="GO:0005840">
    <property type="term" value="C:ribosome"/>
    <property type="evidence" value="ECO:0007669"/>
    <property type="project" value="UniProtKB-KW"/>
</dbReference>
<dbReference type="GO" id="GO:0003729">
    <property type="term" value="F:mRNA binding"/>
    <property type="evidence" value="ECO:0007669"/>
    <property type="project" value="UniProtKB-ARBA"/>
</dbReference>
<dbReference type="GO" id="GO:0019843">
    <property type="term" value="F:rRNA binding"/>
    <property type="evidence" value="ECO:0007669"/>
    <property type="project" value="UniProtKB-UniRule"/>
</dbReference>
<dbReference type="GO" id="GO:0003735">
    <property type="term" value="F:structural constituent of ribosome"/>
    <property type="evidence" value="ECO:0007669"/>
    <property type="project" value="InterPro"/>
</dbReference>
<dbReference type="GO" id="GO:0006412">
    <property type="term" value="P:translation"/>
    <property type="evidence" value="ECO:0007669"/>
    <property type="project" value="UniProtKB-UniRule"/>
</dbReference>
<dbReference type="FunFam" id="3.30.70.330:FF:000002">
    <property type="entry name" value="50S ribosomal protein L23, chloroplastic"/>
    <property type="match status" value="1"/>
</dbReference>
<dbReference type="Gene3D" id="3.30.70.330">
    <property type="match status" value="1"/>
</dbReference>
<dbReference type="HAMAP" id="MF_01369_B">
    <property type="entry name" value="Ribosomal_uL23_B"/>
    <property type="match status" value="1"/>
</dbReference>
<dbReference type="InterPro" id="IPR012677">
    <property type="entry name" value="Nucleotide-bd_a/b_plait_sf"/>
</dbReference>
<dbReference type="InterPro" id="IPR013025">
    <property type="entry name" value="Ribosomal_uL23-like"/>
</dbReference>
<dbReference type="InterPro" id="IPR012678">
    <property type="entry name" value="Ribosomal_uL23/eL15/eS24_sf"/>
</dbReference>
<dbReference type="InterPro" id="IPR001014">
    <property type="entry name" value="Ribosomal_uL23_CS"/>
</dbReference>
<dbReference type="PANTHER" id="PTHR11620">
    <property type="entry name" value="60S RIBOSOMAL PROTEIN L23A"/>
    <property type="match status" value="1"/>
</dbReference>
<dbReference type="Pfam" id="PF00276">
    <property type="entry name" value="Ribosomal_L23"/>
    <property type="match status" value="1"/>
</dbReference>
<dbReference type="SUPFAM" id="SSF54189">
    <property type="entry name" value="Ribosomal proteins S24e, L23 and L15e"/>
    <property type="match status" value="1"/>
</dbReference>
<dbReference type="PROSITE" id="PS00050">
    <property type="entry name" value="RIBOSOMAL_L23"/>
    <property type="match status" value="1"/>
</dbReference>
<comment type="function">
    <text evidence="1">Binds to 23S rRNA.</text>
</comment>
<comment type="subunit">
    <text evidence="1">Part of the 50S ribosomal subunit.</text>
</comment>
<comment type="subcellular location">
    <subcellularLocation>
        <location>Plastid</location>
        <location>Chloroplast</location>
    </subcellularLocation>
</comment>
<comment type="similarity">
    <text evidence="2">Belongs to the universal ribosomal protein uL23 family.</text>
</comment>
<geneLocation type="chloroplast"/>